<name>RL4_SOLM1</name>
<accession>C4XLX4</accession>
<feature type="chain" id="PRO_1000214568" description="Large ribosomal subunit protein uL4">
    <location>
        <begin position="1"/>
        <end position="210"/>
    </location>
</feature>
<feature type="region of interest" description="Disordered" evidence="2">
    <location>
        <begin position="56"/>
        <end position="80"/>
    </location>
</feature>
<comment type="function">
    <text evidence="1">One of the primary rRNA binding proteins, this protein initially binds near the 5'-end of the 23S rRNA. It is important during the early stages of 50S assembly. It makes multiple contacts with different domains of the 23S rRNA in the assembled 50S subunit and ribosome.</text>
</comment>
<comment type="function">
    <text evidence="1">Forms part of the polypeptide exit tunnel.</text>
</comment>
<comment type="subunit">
    <text evidence="1">Part of the 50S ribosomal subunit.</text>
</comment>
<comment type="similarity">
    <text evidence="1">Belongs to the universal ribosomal protein uL4 family.</text>
</comment>
<sequence>MANVKLFNQGCQEIGTVDLAPEVFEVEVQPELLHLVVRAQLAAKRAGTHSVKTRAFVSGGGKKPWRQKGTGRARAGSTRSPLWRGGAVVHGPQPRDYTFKVNRKVRQLALRMALSAKLVEDQLVLLDAIAFPEVKTKLMAKVVSDFSWKKALIVLPESDNNLELSARNLPGIKVVRQDMLNVYDVLLHDHVVMMKDAALKVQERLGHGIR</sequence>
<proteinExistence type="inferred from homology"/>
<evidence type="ECO:0000255" key="1">
    <source>
        <dbReference type="HAMAP-Rule" id="MF_01328"/>
    </source>
</evidence>
<evidence type="ECO:0000256" key="2">
    <source>
        <dbReference type="SAM" id="MobiDB-lite"/>
    </source>
</evidence>
<evidence type="ECO:0000305" key="3"/>
<organism>
    <name type="scientific">Solidesulfovibrio magneticus (strain ATCC 700980 / DSM 13731 / RS-1)</name>
    <name type="common">Desulfovibrio magneticus</name>
    <dbReference type="NCBI Taxonomy" id="573370"/>
    <lineage>
        <taxon>Bacteria</taxon>
        <taxon>Pseudomonadati</taxon>
        <taxon>Thermodesulfobacteriota</taxon>
        <taxon>Desulfovibrionia</taxon>
        <taxon>Desulfovibrionales</taxon>
        <taxon>Desulfovibrionaceae</taxon>
        <taxon>Solidesulfovibrio</taxon>
    </lineage>
</organism>
<reference key="1">
    <citation type="journal article" date="2009" name="Genome Res.">
        <title>Whole genome sequence of Desulfovibrio magneticus strain RS-1 revealed common gene clusters in magnetotactic bacteria.</title>
        <authorList>
            <person name="Nakazawa H."/>
            <person name="Arakaki A."/>
            <person name="Narita-Yamada S."/>
            <person name="Yashiro I."/>
            <person name="Jinno K."/>
            <person name="Aoki N."/>
            <person name="Tsuruyama A."/>
            <person name="Okamura Y."/>
            <person name="Tanikawa S."/>
            <person name="Fujita N."/>
            <person name="Takeyama H."/>
            <person name="Matsunaga T."/>
        </authorList>
    </citation>
    <scope>NUCLEOTIDE SEQUENCE [LARGE SCALE GENOMIC DNA]</scope>
    <source>
        <strain>ATCC 700980 / DSM 13731 / RS-1</strain>
    </source>
</reference>
<protein>
    <recommendedName>
        <fullName evidence="1">Large ribosomal subunit protein uL4</fullName>
    </recommendedName>
    <alternativeName>
        <fullName evidence="3">50S ribosomal protein L4</fullName>
    </alternativeName>
</protein>
<gene>
    <name evidence="1" type="primary">rplD</name>
    <name type="ordered locus">DMR_12210</name>
</gene>
<dbReference type="EMBL" id="AP010904">
    <property type="protein sequence ID" value="BAH74712.1"/>
    <property type="molecule type" value="Genomic_DNA"/>
</dbReference>
<dbReference type="RefSeq" id="WP_015859932.1">
    <property type="nucleotide sequence ID" value="NC_012796.1"/>
</dbReference>
<dbReference type="SMR" id="C4XLX4"/>
<dbReference type="STRING" id="573370.DMR_12210"/>
<dbReference type="KEGG" id="dma:DMR_12210"/>
<dbReference type="eggNOG" id="COG0088">
    <property type="taxonomic scope" value="Bacteria"/>
</dbReference>
<dbReference type="HOGENOM" id="CLU_041575_5_2_7"/>
<dbReference type="OrthoDB" id="9803201at2"/>
<dbReference type="Proteomes" id="UP000009071">
    <property type="component" value="Chromosome"/>
</dbReference>
<dbReference type="GO" id="GO:1990904">
    <property type="term" value="C:ribonucleoprotein complex"/>
    <property type="evidence" value="ECO:0007669"/>
    <property type="project" value="UniProtKB-KW"/>
</dbReference>
<dbReference type="GO" id="GO:0005840">
    <property type="term" value="C:ribosome"/>
    <property type="evidence" value="ECO:0007669"/>
    <property type="project" value="UniProtKB-KW"/>
</dbReference>
<dbReference type="GO" id="GO:0019843">
    <property type="term" value="F:rRNA binding"/>
    <property type="evidence" value="ECO:0007669"/>
    <property type="project" value="UniProtKB-UniRule"/>
</dbReference>
<dbReference type="GO" id="GO:0003735">
    <property type="term" value="F:structural constituent of ribosome"/>
    <property type="evidence" value="ECO:0007669"/>
    <property type="project" value="InterPro"/>
</dbReference>
<dbReference type="GO" id="GO:0006412">
    <property type="term" value="P:translation"/>
    <property type="evidence" value="ECO:0007669"/>
    <property type="project" value="UniProtKB-UniRule"/>
</dbReference>
<dbReference type="Gene3D" id="3.40.1370.10">
    <property type="match status" value="1"/>
</dbReference>
<dbReference type="HAMAP" id="MF_01328_B">
    <property type="entry name" value="Ribosomal_uL4_B"/>
    <property type="match status" value="1"/>
</dbReference>
<dbReference type="InterPro" id="IPR002136">
    <property type="entry name" value="Ribosomal_uL4"/>
</dbReference>
<dbReference type="InterPro" id="IPR013005">
    <property type="entry name" value="Ribosomal_uL4-like"/>
</dbReference>
<dbReference type="InterPro" id="IPR023574">
    <property type="entry name" value="Ribosomal_uL4_dom_sf"/>
</dbReference>
<dbReference type="NCBIfam" id="TIGR03953">
    <property type="entry name" value="rplD_bact"/>
    <property type="match status" value="1"/>
</dbReference>
<dbReference type="PANTHER" id="PTHR10746">
    <property type="entry name" value="50S RIBOSOMAL PROTEIN L4"/>
    <property type="match status" value="1"/>
</dbReference>
<dbReference type="PANTHER" id="PTHR10746:SF6">
    <property type="entry name" value="LARGE RIBOSOMAL SUBUNIT PROTEIN UL4M"/>
    <property type="match status" value="1"/>
</dbReference>
<dbReference type="Pfam" id="PF00573">
    <property type="entry name" value="Ribosomal_L4"/>
    <property type="match status" value="1"/>
</dbReference>
<dbReference type="SUPFAM" id="SSF52166">
    <property type="entry name" value="Ribosomal protein L4"/>
    <property type="match status" value="1"/>
</dbReference>
<keyword id="KW-0687">Ribonucleoprotein</keyword>
<keyword id="KW-0689">Ribosomal protein</keyword>
<keyword id="KW-0694">RNA-binding</keyword>
<keyword id="KW-0699">rRNA-binding</keyword>